<gene>
    <name type="primary">trx1</name>
    <name type="ordered locus">CT0785</name>
</gene>
<evidence type="ECO:0000255" key="1">
    <source>
        <dbReference type="PROSITE-ProRule" id="PRU00691"/>
    </source>
</evidence>
<evidence type="ECO:0000305" key="2"/>
<reference key="1">
    <citation type="journal article" date="2002" name="Proc. Natl. Acad. Sci. U.S.A.">
        <title>The complete genome sequence of Chlorobium tepidum TLS, a photosynthetic, anaerobic, green-sulfur bacterium.</title>
        <authorList>
            <person name="Eisen J.A."/>
            <person name="Nelson K.E."/>
            <person name="Paulsen I.T."/>
            <person name="Heidelberg J.F."/>
            <person name="Wu M."/>
            <person name="Dodson R.J."/>
            <person name="DeBoy R.T."/>
            <person name="Gwinn M.L."/>
            <person name="Nelson W.C."/>
            <person name="Haft D.H."/>
            <person name="Hickey E.K."/>
            <person name="Peterson J.D."/>
            <person name="Durkin A.S."/>
            <person name="Kolonay J.F."/>
            <person name="Yang F."/>
            <person name="Holt I.E."/>
            <person name="Umayam L.A."/>
            <person name="Mason T.M."/>
            <person name="Brenner M."/>
            <person name="Shea T.P."/>
            <person name="Parksey D.S."/>
            <person name="Nierman W.C."/>
            <person name="Feldblyum T.V."/>
            <person name="Hansen C.L."/>
            <person name="Craven M.B."/>
            <person name="Radune D."/>
            <person name="Vamathevan J.J."/>
            <person name="Khouri H.M."/>
            <person name="White O."/>
            <person name="Gruber T.M."/>
            <person name="Ketchum K.A."/>
            <person name="Venter J.C."/>
            <person name="Tettelin H."/>
            <person name="Bryant D.A."/>
            <person name="Fraser C.M."/>
        </authorList>
    </citation>
    <scope>NUCLEOTIDE SEQUENCE [LARGE SCALE GENOMIC DNA]</scope>
    <source>
        <strain>ATCC 49652 / DSM 12025 / NBRC 103806 / TLS</strain>
    </source>
</reference>
<accession>Q8KEA4</accession>
<feature type="chain" id="PRO_0000120088" description="Thioredoxin 1">
    <location>
        <begin position="1"/>
        <end position="101"/>
    </location>
</feature>
<feature type="domain" description="Thioredoxin" evidence="1">
    <location>
        <begin position="2"/>
        <end position="101"/>
    </location>
</feature>
<feature type="disulfide bond" description="Redox-active" evidence="1">
    <location>
        <begin position="25"/>
        <end position="28"/>
    </location>
</feature>
<protein>
    <recommendedName>
        <fullName>Thioredoxin 1</fullName>
        <shortName>Trx-1</shortName>
    </recommendedName>
</protein>
<dbReference type="EMBL" id="AE006470">
    <property type="protein sequence ID" value="AAM72022.1"/>
    <property type="molecule type" value="Genomic_DNA"/>
</dbReference>
<dbReference type="RefSeq" id="NP_661680.1">
    <property type="nucleotide sequence ID" value="NC_002932.3"/>
</dbReference>
<dbReference type="RefSeq" id="WP_010932467.1">
    <property type="nucleotide sequence ID" value="NC_002932.3"/>
</dbReference>
<dbReference type="SMR" id="Q8KEA4"/>
<dbReference type="STRING" id="194439.CT0785"/>
<dbReference type="EnsemblBacteria" id="AAM72022">
    <property type="protein sequence ID" value="AAM72022"/>
    <property type="gene ID" value="CT0785"/>
</dbReference>
<dbReference type="KEGG" id="cte:CT0785"/>
<dbReference type="PATRIC" id="fig|194439.7.peg.713"/>
<dbReference type="eggNOG" id="COG3118">
    <property type="taxonomic scope" value="Bacteria"/>
</dbReference>
<dbReference type="HOGENOM" id="CLU_090389_10_4_10"/>
<dbReference type="OrthoDB" id="9790390at2"/>
<dbReference type="Proteomes" id="UP000001007">
    <property type="component" value="Chromosome"/>
</dbReference>
<dbReference type="GO" id="GO:0005737">
    <property type="term" value="C:cytoplasm"/>
    <property type="evidence" value="ECO:0007669"/>
    <property type="project" value="TreeGrafter"/>
</dbReference>
<dbReference type="GO" id="GO:0015035">
    <property type="term" value="F:protein-disulfide reductase activity"/>
    <property type="evidence" value="ECO:0007669"/>
    <property type="project" value="InterPro"/>
</dbReference>
<dbReference type="CDD" id="cd02947">
    <property type="entry name" value="TRX_family"/>
    <property type="match status" value="1"/>
</dbReference>
<dbReference type="FunFam" id="3.40.30.10:FF:000001">
    <property type="entry name" value="Thioredoxin"/>
    <property type="match status" value="1"/>
</dbReference>
<dbReference type="Gene3D" id="3.40.30.10">
    <property type="entry name" value="Glutaredoxin"/>
    <property type="match status" value="1"/>
</dbReference>
<dbReference type="InterPro" id="IPR005746">
    <property type="entry name" value="Thioredoxin"/>
</dbReference>
<dbReference type="InterPro" id="IPR036249">
    <property type="entry name" value="Thioredoxin-like_sf"/>
</dbReference>
<dbReference type="InterPro" id="IPR017937">
    <property type="entry name" value="Thioredoxin_CS"/>
</dbReference>
<dbReference type="InterPro" id="IPR013766">
    <property type="entry name" value="Thioredoxin_domain"/>
</dbReference>
<dbReference type="NCBIfam" id="TIGR01068">
    <property type="entry name" value="thioredoxin"/>
    <property type="match status" value="1"/>
</dbReference>
<dbReference type="PANTHER" id="PTHR45663">
    <property type="entry name" value="GEO12009P1"/>
    <property type="match status" value="1"/>
</dbReference>
<dbReference type="PANTHER" id="PTHR45663:SF11">
    <property type="entry name" value="GEO12009P1"/>
    <property type="match status" value="1"/>
</dbReference>
<dbReference type="Pfam" id="PF00085">
    <property type="entry name" value="Thioredoxin"/>
    <property type="match status" value="1"/>
</dbReference>
<dbReference type="PIRSF" id="PIRSF000077">
    <property type="entry name" value="Thioredoxin"/>
    <property type="match status" value="1"/>
</dbReference>
<dbReference type="PRINTS" id="PR00421">
    <property type="entry name" value="THIOREDOXIN"/>
</dbReference>
<dbReference type="SUPFAM" id="SSF52833">
    <property type="entry name" value="Thioredoxin-like"/>
    <property type="match status" value="1"/>
</dbReference>
<dbReference type="PROSITE" id="PS00194">
    <property type="entry name" value="THIOREDOXIN_1"/>
    <property type="match status" value="1"/>
</dbReference>
<dbReference type="PROSITE" id="PS51352">
    <property type="entry name" value="THIOREDOXIN_2"/>
    <property type="match status" value="1"/>
</dbReference>
<proteinExistence type="inferred from homology"/>
<keyword id="KW-1015">Disulfide bond</keyword>
<keyword id="KW-0249">Electron transport</keyword>
<keyword id="KW-0676">Redox-active center</keyword>
<keyword id="KW-1185">Reference proteome</keyword>
<keyword id="KW-0813">Transport</keyword>
<comment type="function">
    <text>Participates in various redox reactions through the reversible oxidation of its active center dithiol to a disulfide and catalyzes dithiol-disulfide exchange reactions.</text>
</comment>
<comment type="similarity">
    <text evidence="2">Belongs to the thioredoxin family.</text>
</comment>
<name>THIO1_CHLTE</name>
<sequence>MAQTLDDLIRTSELPVFIDFWADWCGPCKMVAPSVKQLASEFKGRLIVVKVNVDQQPDAAARFQVQGIPALMLFVGGQLKWRTAGAIPYQQMRQEVLKAIG</sequence>
<organism>
    <name type="scientific">Chlorobaculum tepidum (strain ATCC 49652 / DSM 12025 / NBRC 103806 / TLS)</name>
    <name type="common">Chlorobium tepidum</name>
    <dbReference type="NCBI Taxonomy" id="194439"/>
    <lineage>
        <taxon>Bacteria</taxon>
        <taxon>Pseudomonadati</taxon>
        <taxon>Chlorobiota</taxon>
        <taxon>Chlorobiia</taxon>
        <taxon>Chlorobiales</taxon>
        <taxon>Chlorobiaceae</taxon>
        <taxon>Chlorobaculum</taxon>
    </lineage>
</organism>